<name>LCL2_PARBP</name>
<dbReference type="EMBL" id="KN305535">
    <property type="protein sequence ID" value="EEH21789.1"/>
    <property type="molecule type" value="Genomic_DNA"/>
</dbReference>
<dbReference type="VEuPathDB" id="FungiDB:PABG_04005"/>
<dbReference type="HOGENOM" id="CLU_142363_0_0_1"/>
<dbReference type="OrthoDB" id="18530at33183"/>
<dbReference type="GO" id="GO:0036503">
    <property type="term" value="P:ERAD pathway"/>
    <property type="evidence" value="ECO:0007669"/>
    <property type="project" value="TreeGrafter"/>
</dbReference>
<dbReference type="CDD" id="cd23996">
    <property type="entry name" value="LCL2-like"/>
    <property type="match status" value="1"/>
</dbReference>
<dbReference type="InterPro" id="IPR034543">
    <property type="entry name" value="LCL2"/>
</dbReference>
<dbReference type="PANTHER" id="PTHR38425">
    <property type="entry name" value="LONG CHRONOLOGICAL LIFESPAN PROTEIN 2"/>
    <property type="match status" value="1"/>
</dbReference>
<dbReference type="PANTHER" id="PTHR38425:SF1">
    <property type="entry name" value="LONG CHRONOLOGICAL LIFESPAN PROTEIN 2"/>
    <property type="match status" value="1"/>
</dbReference>
<accession>C0S855</accession>
<gene>
    <name type="primary">LCL2</name>
    <name type="ORF">PABG_04005</name>
</gene>
<protein>
    <recommendedName>
        <fullName>Long chronological lifespan protein 2</fullName>
    </recommendedName>
</protein>
<sequence>MEIKMFHILIGALLGLLFLATGTRAQFQFFEQMFGGGGHQQQQDHREQNVASDSSWYQRNYDNAHCSDYLCPGTLACVSVPHHCPCQHPDVEDKFELGDGSAICISKGGFKANEAARKVELARKGLL</sequence>
<reference key="1">
    <citation type="journal article" date="2011" name="PLoS Genet.">
        <title>Comparative genomic analysis of human fungal pathogens causing paracoccidioidomycosis.</title>
        <authorList>
            <person name="Desjardins C.A."/>
            <person name="Champion M.D."/>
            <person name="Holder J.W."/>
            <person name="Muszewska A."/>
            <person name="Goldberg J."/>
            <person name="Bailao A.M."/>
            <person name="Brigido M.M."/>
            <person name="Ferreira M.E."/>
            <person name="Garcia A.M."/>
            <person name="Grynberg M."/>
            <person name="Gujja S."/>
            <person name="Heiman D.I."/>
            <person name="Henn M.R."/>
            <person name="Kodira C.D."/>
            <person name="Leon-Narvaez H."/>
            <person name="Longo L.V.G."/>
            <person name="Ma L.-J."/>
            <person name="Malavazi I."/>
            <person name="Matsuo A.L."/>
            <person name="Morais F.V."/>
            <person name="Pereira M."/>
            <person name="Rodriguez-Brito S."/>
            <person name="Sakthikumar S."/>
            <person name="Salem-Izacc S.M."/>
            <person name="Sykes S.M."/>
            <person name="Teixeira M.M."/>
            <person name="Vallejo M.C."/>
            <person name="Walter M.E."/>
            <person name="Yandava C."/>
            <person name="Young S."/>
            <person name="Zeng Q."/>
            <person name="Zucker J."/>
            <person name="Felipe M.S."/>
            <person name="Goldman G.H."/>
            <person name="Haas B.J."/>
            <person name="McEwen J.G."/>
            <person name="Nino-Vega G."/>
            <person name="Puccia R."/>
            <person name="San-Blas G."/>
            <person name="Soares C.M."/>
            <person name="Birren B.W."/>
            <person name="Cuomo C.A."/>
        </authorList>
    </citation>
    <scope>NUCLEOTIDE SEQUENCE [LARGE SCALE GENOMIC DNA]</scope>
    <source>
        <strain>Pb03</strain>
    </source>
</reference>
<keyword id="KW-0732">Signal</keyword>
<feature type="signal peptide" evidence="2">
    <location>
        <begin position="1"/>
        <end position="25"/>
    </location>
</feature>
<feature type="chain" id="PRO_0000408618" description="Long chronological lifespan protein 2">
    <location>
        <begin position="26"/>
        <end position="127"/>
    </location>
</feature>
<evidence type="ECO:0000250" key="1"/>
<evidence type="ECO:0000255" key="2"/>
<evidence type="ECO:0000305" key="3"/>
<proteinExistence type="inferred from homology"/>
<comment type="function">
    <text evidence="1">Probable component of the endoplasmic reticulum-associated degradation (ERAD) pathway.</text>
</comment>
<comment type="similarity">
    <text evidence="3">Belongs to the LCL2 family.</text>
</comment>
<organism>
    <name type="scientific">Paracoccidioides brasiliensis (strain Pb03)</name>
    <dbReference type="NCBI Taxonomy" id="482561"/>
    <lineage>
        <taxon>Eukaryota</taxon>
        <taxon>Fungi</taxon>
        <taxon>Dikarya</taxon>
        <taxon>Ascomycota</taxon>
        <taxon>Pezizomycotina</taxon>
        <taxon>Eurotiomycetes</taxon>
        <taxon>Eurotiomycetidae</taxon>
        <taxon>Onygenales</taxon>
        <taxon>Ajellomycetaceae</taxon>
        <taxon>Paracoccidioides</taxon>
    </lineage>
</organism>